<gene>
    <name evidence="1" type="primary">lpxK</name>
    <name type="ordered locus">LBF_0907</name>
</gene>
<proteinExistence type="inferred from homology"/>
<reference key="1">
    <citation type="journal article" date="2008" name="PLoS ONE">
        <title>Genome sequence of the saprophyte Leptospira biflexa provides insights into the evolution of Leptospira and the pathogenesis of leptospirosis.</title>
        <authorList>
            <person name="Picardeau M."/>
            <person name="Bulach D.M."/>
            <person name="Bouchier C."/>
            <person name="Zuerner R.L."/>
            <person name="Zidane N."/>
            <person name="Wilson P.J."/>
            <person name="Creno S."/>
            <person name="Kuczek E.S."/>
            <person name="Bommezzadri S."/>
            <person name="Davis J.C."/>
            <person name="McGrath A."/>
            <person name="Johnson M.J."/>
            <person name="Boursaux-Eude C."/>
            <person name="Seemann T."/>
            <person name="Rouy Z."/>
            <person name="Coppel R.L."/>
            <person name="Rood J.I."/>
            <person name="Lajus A."/>
            <person name="Davies J.K."/>
            <person name="Medigue C."/>
            <person name="Adler B."/>
        </authorList>
    </citation>
    <scope>NUCLEOTIDE SEQUENCE [LARGE SCALE GENOMIC DNA]</scope>
    <source>
        <strain>Patoc 1 / Ames</strain>
    </source>
</reference>
<name>LPXK_LEPBA</name>
<feature type="chain" id="PRO_0000340839" description="Tetraacyldisaccharide 4'-kinase">
    <location>
        <begin position="1"/>
        <end position="374"/>
    </location>
</feature>
<feature type="binding site" evidence="1">
    <location>
        <begin position="43"/>
        <end position="50"/>
    </location>
    <ligand>
        <name>ATP</name>
        <dbReference type="ChEBI" id="CHEBI:30616"/>
    </ligand>
</feature>
<keyword id="KW-0067">ATP-binding</keyword>
<keyword id="KW-0418">Kinase</keyword>
<keyword id="KW-0441">Lipid A biosynthesis</keyword>
<keyword id="KW-0444">Lipid biosynthesis</keyword>
<keyword id="KW-0443">Lipid metabolism</keyword>
<keyword id="KW-0547">Nucleotide-binding</keyword>
<keyword id="KW-0808">Transferase</keyword>
<accession>B0SDY8</accession>
<organism>
    <name type="scientific">Leptospira biflexa serovar Patoc (strain Patoc 1 / Ames)</name>
    <dbReference type="NCBI Taxonomy" id="355278"/>
    <lineage>
        <taxon>Bacteria</taxon>
        <taxon>Pseudomonadati</taxon>
        <taxon>Spirochaetota</taxon>
        <taxon>Spirochaetia</taxon>
        <taxon>Leptospirales</taxon>
        <taxon>Leptospiraceae</taxon>
        <taxon>Leptospira</taxon>
    </lineage>
</organism>
<evidence type="ECO:0000255" key="1">
    <source>
        <dbReference type="HAMAP-Rule" id="MF_00409"/>
    </source>
</evidence>
<sequence length="374" mass="42852">MKFFFILFYPLSLLYQFLFWVSQFKIKPFVLPHVLVISVGNVTMGGTGKTPFVQYLVRYFKAKNKKYAITILSRGYKAKLSKVGAILRDGLSPHLYGDEPSEHKELFPDVQVIIGKNRKESFLKHNQIHSKFHIVILDDGFQHKQIHRDFDIVLLDANGPFGNGQTIPLGFLREPISHLRRAHTIVFTKLTDQNKDKSIRAINILKQKQIPVPSYTSHFLANLVQIDLNTLKSNPVQLPVDQIRQTKVLDEDANDGYFLFTGVGNPKHVLETAESIIGKKINQHRFFPDHYEFEESVLGSIIGEVKQGTVLLTTEKDWVKVRTKKGFLEELKKRNIQIFVIKIEVVVNEKESFESMLAGLVSTYEAKNDLVSMN</sequence>
<comment type="function">
    <text evidence="1">Transfers the gamma-phosphate of ATP to the 4'-position of a tetraacyldisaccharide 1-phosphate intermediate (termed DS-1-P) to form tetraacyldisaccharide 1,4'-bis-phosphate (lipid IVA).</text>
</comment>
<comment type="catalytic activity">
    <reaction evidence="1">
        <text>a lipid A disaccharide + ATP = a lipid IVA + ADP + H(+)</text>
        <dbReference type="Rhea" id="RHEA:67840"/>
        <dbReference type="ChEBI" id="CHEBI:15378"/>
        <dbReference type="ChEBI" id="CHEBI:30616"/>
        <dbReference type="ChEBI" id="CHEBI:176343"/>
        <dbReference type="ChEBI" id="CHEBI:176425"/>
        <dbReference type="ChEBI" id="CHEBI:456216"/>
        <dbReference type="EC" id="2.7.1.130"/>
    </reaction>
</comment>
<comment type="pathway">
    <text evidence="1">Glycolipid biosynthesis; lipid IV(A) biosynthesis; lipid IV(A) from (3R)-3-hydroxytetradecanoyl-[acyl-carrier-protein] and UDP-N-acetyl-alpha-D-glucosamine: step 6/6.</text>
</comment>
<comment type="similarity">
    <text evidence="1">Belongs to the LpxK family.</text>
</comment>
<protein>
    <recommendedName>
        <fullName evidence="1">Tetraacyldisaccharide 4'-kinase</fullName>
        <ecNumber evidence="1">2.7.1.130</ecNumber>
    </recommendedName>
    <alternativeName>
        <fullName evidence="1">Lipid A 4'-kinase</fullName>
    </alternativeName>
</protein>
<dbReference type="EC" id="2.7.1.130" evidence="1"/>
<dbReference type="EMBL" id="CP000777">
    <property type="protein sequence ID" value="ABZ93438.1"/>
    <property type="molecule type" value="Genomic_DNA"/>
</dbReference>
<dbReference type="RefSeq" id="WP_012387947.1">
    <property type="nucleotide sequence ID" value="NC_010842.1"/>
</dbReference>
<dbReference type="SMR" id="B0SDY8"/>
<dbReference type="KEGG" id="lbf:LBF_0907"/>
<dbReference type="HOGENOM" id="CLU_038816_6_0_12"/>
<dbReference type="UniPathway" id="UPA00359">
    <property type="reaction ID" value="UER00482"/>
</dbReference>
<dbReference type="GO" id="GO:0005886">
    <property type="term" value="C:plasma membrane"/>
    <property type="evidence" value="ECO:0007669"/>
    <property type="project" value="TreeGrafter"/>
</dbReference>
<dbReference type="GO" id="GO:0005524">
    <property type="term" value="F:ATP binding"/>
    <property type="evidence" value="ECO:0007669"/>
    <property type="project" value="UniProtKB-UniRule"/>
</dbReference>
<dbReference type="GO" id="GO:0009029">
    <property type="term" value="F:tetraacyldisaccharide 4'-kinase activity"/>
    <property type="evidence" value="ECO:0007669"/>
    <property type="project" value="UniProtKB-UniRule"/>
</dbReference>
<dbReference type="GO" id="GO:0009245">
    <property type="term" value="P:lipid A biosynthetic process"/>
    <property type="evidence" value="ECO:0007669"/>
    <property type="project" value="UniProtKB-UniRule"/>
</dbReference>
<dbReference type="GO" id="GO:0009244">
    <property type="term" value="P:lipopolysaccharide core region biosynthetic process"/>
    <property type="evidence" value="ECO:0007669"/>
    <property type="project" value="TreeGrafter"/>
</dbReference>
<dbReference type="HAMAP" id="MF_00409">
    <property type="entry name" value="LpxK"/>
    <property type="match status" value="1"/>
</dbReference>
<dbReference type="InterPro" id="IPR003758">
    <property type="entry name" value="LpxK"/>
</dbReference>
<dbReference type="NCBIfam" id="TIGR00682">
    <property type="entry name" value="lpxK"/>
    <property type="match status" value="1"/>
</dbReference>
<dbReference type="PANTHER" id="PTHR42724">
    <property type="entry name" value="TETRAACYLDISACCHARIDE 4'-KINASE"/>
    <property type="match status" value="1"/>
</dbReference>
<dbReference type="PANTHER" id="PTHR42724:SF1">
    <property type="entry name" value="TETRAACYLDISACCHARIDE 4'-KINASE, MITOCHONDRIAL-RELATED"/>
    <property type="match status" value="1"/>
</dbReference>
<dbReference type="Pfam" id="PF02606">
    <property type="entry name" value="LpxK"/>
    <property type="match status" value="1"/>
</dbReference>